<proteinExistence type="inferred from homology"/>
<gene>
    <name evidence="1" type="primary">ulaG</name>
    <name type="ordered locus">Z5801</name>
    <name type="ordered locus">ECs5168</name>
</gene>
<evidence type="ECO:0000255" key="1">
    <source>
        <dbReference type="HAMAP-Rule" id="MF_01266"/>
    </source>
</evidence>
<evidence type="ECO:0000305" key="2"/>
<keyword id="KW-0963">Cytoplasm</keyword>
<keyword id="KW-0378">Hydrolase</keyword>
<keyword id="KW-1185">Reference proteome</keyword>
<name>ULAG_ECO57</name>
<organism>
    <name type="scientific">Escherichia coli O157:H7</name>
    <dbReference type="NCBI Taxonomy" id="83334"/>
    <lineage>
        <taxon>Bacteria</taxon>
        <taxon>Pseudomonadati</taxon>
        <taxon>Pseudomonadota</taxon>
        <taxon>Gammaproteobacteria</taxon>
        <taxon>Enterobacterales</taxon>
        <taxon>Enterobacteriaceae</taxon>
        <taxon>Escherichia</taxon>
    </lineage>
</organism>
<reference key="1">
    <citation type="journal article" date="2001" name="Nature">
        <title>Genome sequence of enterohaemorrhagic Escherichia coli O157:H7.</title>
        <authorList>
            <person name="Perna N.T."/>
            <person name="Plunkett G. III"/>
            <person name="Burland V."/>
            <person name="Mau B."/>
            <person name="Glasner J.D."/>
            <person name="Rose D.J."/>
            <person name="Mayhew G.F."/>
            <person name="Evans P.S."/>
            <person name="Gregor J."/>
            <person name="Kirkpatrick H.A."/>
            <person name="Posfai G."/>
            <person name="Hackett J."/>
            <person name="Klink S."/>
            <person name="Boutin A."/>
            <person name="Shao Y."/>
            <person name="Miller L."/>
            <person name="Grotbeck E.J."/>
            <person name="Davis N.W."/>
            <person name="Lim A."/>
            <person name="Dimalanta E.T."/>
            <person name="Potamousis K."/>
            <person name="Apodaca J."/>
            <person name="Anantharaman T.S."/>
            <person name="Lin J."/>
            <person name="Yen G."/>
            <person name="Schwartz D.C."/>
            <person name="Welch R.A."/>
            <person name="Blattner F.R."/>
        </authorList>
    </citation>
    <scope>NUCLEOTIDE SEQUENCE [LARGE SCALE GENOMIC DNA]</scope>
    <source>
        <strain>O157:H7 / EDL933 / ATCC 700927 / EHEC</strain>
    </source>
</reference>
<reference key="2">
    <citation type="journal article" date="2001" name="DNA Res.">
        <title>Complete genome sequence of enterohemorrhagic Escherichia coli O157:H7 and genomic comparison with a laboratory strain K-12.</title>
        <authorList>
            <person name="Hayashi T."/>
            <person name="Makino K."/>
            <person name="Ohnishi M."/>
            <person name="Kurokawa K."/>
            <person name="Ishii K."/>
            <person name="Yokoyama K."/>
            <person name="Han C.-G."/>
            <person name="Ohtsubo E."/>
            <person name="Nakayama K."/>
            <person name="Murata T."/>
            <person name="Tanaka M."/>
            <person name="Tobe T."/>
            <person name="Iida T."/>
            <person name="Takami H."/>
            <person name="Honda T."/>
            <person name="Sasakawa C."/>
            <person name="Ogasawara N."/>
            <person name="Yasunaga T."/>
            <person name="Kuhara S."/>
            <person name="Shiba T."/>
            <person name="Hattori M."/>
            <person name="Shinagawa H."/>
        </authorList>
    </citation>
    <scope>NUCLEOTIDE SEQUENCE [LARGE SCALE GENOMIC DNA]</scope>
    <source>
        <strain>O157:H7 / Sakai / RIMD 0509952 / EHEC</strain>
    </source>
</reference>
<feature type="chain" id="PRO_0000231483" description="Probable L-ascorbate-6-phosphate lactonase UlaG">
    <location>
        <begin position="1"/>
        <end position="354"/>
    </location>
</feature>
<sequence length="354" mass="40061">MSKVKSITRESWILSTFPEWGSWLNEEIEQEQVAPGTFAMWWLGCTGIWLKSEGGTNVCVDFWCGTGKQSHGNPLMKQGHQMQRMAGVKKLQPNLRTTPFVLDPFAIRQIDAVLATHDHNDHIDVNVAAAVMQNCADDVPFIGPKTCVDLWIGWGVPKERCIVVKPGDVVKVKDIEIHALDAFDRTALITLPADQKAAGVLPDGMDDRAVNYLFKTPGGSLYHSGDSHYSNYYAKHGNEHQIDVALGSYGENPRGITDKMTSADMLRMGEALNAKVVIPFHHDIWSNFQADPQEIRVLWEMKKDRLKYGFKPFIWQVGGKFTWPLDKDNFEYHYPRGFDDCFTIEPDLPFKSFL</sequence>
<protein>
    <recommendedName>
        <fullName evidence="1">Probable L-ascorbate-6-phosphate lactonase UlaG</fullName>
        <ecNumber evidence="1">3.1.1.-</ecNumber>
    </recommendedName>
    <alternativeName>
        <fullName evidence="1">L-ascorbate utilization protein G</fullName>
    </alternativeName>
</protein>
<accession>Q8XDJ6</accession>
<accession>Q7A8U9</accession>
<dbReference type="EC" id="3.1.1.-" evidence="1"/>
<dbReference type="EMBL" id="AE005174">
    <property type="protein sequence ID" value="AAG59388.1"/>
    <property type="status" value="ALT_INIT"/>
    <property type="molecule type" value="Genomic_DNA"/>
</dbReference>
<dbReference type="EMBL" id="BA000007">
    <property type="protein sequence ID" value="BAB38591.2"/>
    <property type="molecule type" value="Genomic_DNA"/>
</dbReference>
<dbReference type="PIR" id="H86115">
    <property type="entry name" value="H86115"/>
</dbReference>
<dbReference type="PIR" id="H91274">
    <property type="entry name" value="H91274"/>
</dbReference>
<dbReference type="PIR" id="S56417">
    <property type="entry name" value="S56417"/>
</dbReference>
<dbReference type="RefSeq" id="NP_313195.2">
    <property type="nucleotide sequence ID" value="NC_002695.1"/>
</dbReference>
<dbReference type="RefSeq" id="WP_001295191.1">
    <property type="nucleotide sequence ID" value="NZ_VOAI01000008.1"/>
</dbReference>
<dbReference type="SMR" id="Q8XDJ6"/>
<dbReference type="STRING" id="155864.Z5801"/>
<dbReference type="GeneID" id="914011"/>
<dbReference type="GeneID" id="93777632"/>
<dbReference type="KEGG" id="ece:Z5801"/>
<dbReference type="KEGG" id="ecs:ECs_5168"/>
<dbReference type="PATRIC" id="fig|386585.9.peg.5402"/>
<dbReference type="eggNOG" id="COG2220">
    <property type="taxonomic scope" value="Bacteria"/>
</dbReference>
<dbReference type="HOGENOM" id="CLU_074775_0_0_6"/>
<dbReference type="OMA" id="HWDMWKG"/>
<dbReference type="UniPathway" id="UPA00263">
    <property type="reaction ID" value="UER00377"/>
</dbReference>
<dbReference type="Proteomes" id="UP000000558">
    <property type="component" value="Chromosome"/>
</dbReference>
<dbReference type="Proteomes" id="UP000002519">
    <property type="component" value="Chromosome"/>
</dbReference>
<dbReference type="GO" id="GO:0005737">
    <property type="term" value="C:cytoplasm"/>
    <property type="evidence" value="ECO:0007669"/>
    <property type="project" value="UniProtKB-SubCell"/>
</dbReference>
<dbReference type="GO" id="GO:0035460">
    <property type="term" value="F:L-ascorbate 6-phosphate lactonase activity"/>
    <property type="evidence" value="ECO:0007669"/>
    <property type="project" value="InterPro"/>
</dbReference>
<dbReference type="GO" id="GO:0030145">
    <property type="term" value="F:manganese ion binding"/>
    <property type="evidence" value="ECO:0007669"/>
    <property type="project" value="InterPro"/>
</dbReference>
<dbReference type="GO" id="GO:0019854">
    <property type="term" value="P:L-ascorbic acid catabolic process"/>
    <property type="evidence" value="ECO:0007669"/>
    <property type="project" value="UniProtKB-UniRule"/>
</dbReference>
<dbReference type="CDD" id="cd16284">
    <property type="entry name" value="UlaG-like_MBL-fold"/>
    <property type="match status" value="1"/>
</dbReference>
<dbReference type="FunFam" id="3.60.15.10:FF:000004">
    <property type="entry name" value="Probable L-ascorbate-6-phosphate lactonase UlaG"/>
    <property type="match status" value="1"/>
</dbReference>
<dbReference type="Gene3D" id="3.60.15.10">
    <property type="entry name" value="Ribonuclease Z/Hydroxyacylglutathione hydrolase-like"/>
    <property type="match status" value="1"/>
</dbReference>
<dbReference type="HAMAP" id="MF_01266">
    <property type="entry name" value="UlaG"/>
    <property type="match status" value="1"/>
</dbReference>
<dbReference type="InterPro" id="IPR023951">
    <property type="entry name" value="L-ascorbate_6P_UlaG"/>
</dbReference>
<dbReference type="InterPro" id="IPR001279">
    <property type="entry name" value="Metallo-B-lactamas"/>
</dbReference>
<dbReference type="InterPro" id="IPR036866">
    <property type="entry name" value="RibonucZ/Hydroxyglut_hydro"/>
</dbReference>
<dbReference type="InterPro" id="IPR048021">
    <property type="entry name" value="UlaG-like_MBL-fold"/>
</dbReference>
<dbReference type="InterPro" id="IPR050114">
    <property type="entry name" value="UPF0173_UPF0282_UlaG_hydrolase"/>
</dbReference>
<dbReference type="NCBIfam" id="NF008688">
    <property type="entry name" value="PRK11709.1"/>
    <property type="match status" value="1"/>
</dbReference>
<dbReference type="PANTHER" id="PTHR43546:SF9">
    <property type="entry name" value="L-ASCORBATE-6-PHOSPHATE LACTONASE ULAG-RELATED"/>
    <property type="match status" value="1"/>
</dbReference>
<dbReference type="PANTHER" id="PTHR43546">
    <property type="entry name" value="UPF0173 METAL-DEPENDENT HYDROLASE MJ1163-RELATED"/>
    <property type="match status" value="1"/>
</dbReference>
<dbReference type="Pfam" id="PF12706">
    <property type="entry name" value="Lactamase_B_2"/>
    <property type="match status" value="1"/>
</dbReference>
<dbReference type="SUPFAM" id="SSF56281">
    <property type="entry name" value="Metallo-hydrolase/oxidoreductase"/>
    <property type="match status" value="1"/>
</dbReference>
<comment type="function">
    <text evidence="1">Probably catalyzes the hydrolysis of L-ascorbate-6-P into 3-keto-L-gulonate-6-P. Is essential for L-ascorbate utilization under anaerobic conditions.</text>
</comment>
<comment type="catalytic activity">
    <reaction evidence="1">
        <text>L-ascorbate 6-phosphate + H2O = 3-dehydro-L-gulonate 6-phosphate</text>
        <dbReference type="Rhea" id="RHEA:28803"/>
        <dbReference type="ChEBI" id="CHEBI:15377"/>
        <dbReference type="ChEBI" id="CHEBI:58774"/>
        <dbReference type="ChEBI" id="CHEBI:61698"/>
    </reaction>
</comment>
<comment type="cofactor">
    <cofactor evidence="1">
        <name>a divalent metal cation</name>
        <dbReference type="ChEBI" id="CHEBI:60240"/>
    </cofactor>
</comment>
<comment type="pathway">
    <text evidence="1">Cofactor degradation; L-ascorbate degradation; D-xylulose 5-phosphate from L-ascorbate: step 1/4.</text>
</comment>
<comment type="subcellular location">
    <subcellularLocation>
        <location evidence="1">Cytoplasm</location>
    </subcellularLocation>
</comment>
<comment type="induction">
    <text evidence="1">Induced by L-ascorbate. Repressed by UlaR.</text>
</comment>
<comment type="similarity">
    <text evidence="1">Belongs to the UlaG family.</text>
</comment>
<comment type="sequence caution" evidence="2">
    <conflict type="erroneous initiation">
        <sequence resource="EMBL-CDS" id="AAG59388"/>
    </conflict>
    <text>Extended N-terminus.</text>
</comment>